<evidence type="ECO:0000255" key="1">
    <source>
        <dbReference type="PROSITE-ProRule" id="PRU00303"/>
    </source>
</evidence>
<evidence type="ECO:0000269" key="2">
    <source>
    </source>
</evidence>
<evidence type="ECO:0000269" key="3">
    <source>
    </source>
</evidence>
<evidence type="ECO:0000305" key="4"/>
<evidence type="ECO:0007829" key="5">
    <source>
        <dbReference type="PDB" id="2PSB"/>
    </source>
</evidence>
<sequence>MKKWMTVCALCFVFFLLVSCQQKDAVPDTAKKLKAPLTGLKTEQKVTERRPVAVVVNNHPKARPQSGLSKADIVIEALAEGQITRFLAIFQSQMPETVGPVRSAREYFVTLSNGFDSIFVHHGWSPGAKKQLESGAADYMNGLDFDGSLFWRADFSKPPHNSYTSYDYIKKAAEQKGYKLKQETNPLLFQTSDAKPANESYNVRVDYGTNNVTNLVEYNYDKKAEFYTRSSDGVITTDRETGKPVAMQNIFIVEASHHIIDQDGRRDIDLESGGKGLLFQHGNVIETDWKQVNGRIVPVKDGKWLPFVPGKTWINIVPDLDAASISKGEGV</sequence>
<feature type="signal peptide" evidence="1">
    <location>
        <begin position="1"/>
        <end position="19"/>
    </location>
</feature>
<feature type="chain" id="PRO_0000364085" description="Putative lipoprotein YerB">
    <location>
        <begin position="20"/>
        <end position="331"/>
    </location>
</feature>
<feature type="modified residue" description="Phosphothreonine" evidence="3">
    <location>
        <position position="97"/>
    </location>
</feature>
<feature type="modified residue" description="Phosphoserine" evidence="3">
    <location>
        <position position="103"/>
    </location>
</feature>
<feature type="lipid moiety-binding region" description="N-palmitoyl cysteine" evidence="1">
    <location>
        <position position="20"/>
    </location>
</feature>
<feature type="lipid moiety-binding region" description="S-diacylglycerol cysteine" evidence="1">
    <location>
        <position position="20"/>
    </location>
</feature>
<feature type="sequence conflict" description="In Ref. 1; AAB72189." evidence="4" ref="1">
    <original>K</original>
    <variation>E</variation>
    <location>
        <position position="2"/>
    </location>
</feature>
<feature type="turn" evidence="5">
    <location>
        <begin position="36"/>
        <end position="38"/>
    </location>
</feature>
<feature type="helix" evidence="5">
    <location>
        <begin position="44"/>
        <end position="48"/>
    </location>
</feature>
<feature type="strand" evidence="5">
    <location>
        <begin position="52"/>
        <end position="56"/>
    </location>
</feature>
<feature type="helix" evidence="5">
    <location>
        <begin position="60"/>
        <end position="62"/>
    </location>
</feature>
<feature type="strand" evidence="5">
    <location>
        <begin position="72"/>
        <end position="78"/>
    </location>
</feature>
<feature type="strand" evidence="5">
    <location>
        <begin position="84"/>
        <end position="93"/>
    </location>
</feature>
<feature type="strand" evidence="5">
    <location>
        <begin position="96"/>
        <end position="99"/>
    </location>
</feature>
<feature type="helix" evidence="5">
    <location>
        <begin position="106"/>
        <end position="113"/>
    </location>
</feature>
<feature type="turn" evidence="5">
    <location>
        <begin position="114"/>
        <end position="116"/>
    </location>
</feature>
<feature type="strand" evidence="5">
    <location>
        <begin position="118"/>
        <end position="122"/>
    </location>
</feature>
<feature type="helix" evidence="5">
    <location>
        <begin position="126"/>
        <end position="133"/>
    </location>
</feature>
<feature type="strand" evidence="5">
    <location>
        <begin position="139"/>
        <end position="141"/>
    </location>
</feature>
<feature type="helix" evidence="5">
    <location>
        <begin position="142"/>
        <end position="145"/>
    </location>
</feature>
<feature type="turn" evidence="5">
    <location>
        <begin position="147"/>
        <end position="149"/>
    </location>
</feature>
<feature type="strand" evidence="5">
    <location>
        <begin position="150"/>
        <end position="152"/>
    </location>
</feature>
<feature type="strand" evidence="5">
    <location>
        <begin position="154"/>
        <end position="156"/>
    </location>
</feature>
<feature type="strand" evidence="5">
    <location>
        <begin position="162"/>
        <end position="165"/>
    </location>
</feature>
<feature type="helix" evidence="5">
    <location>
        <begin position="166"/>
        <end position="176"/>
    </location>
</feature>
<feature type="strand" evidence="5">
    <location>
        <begin position="202"/>
        <end position="206"/>
    </location>
</feature>
<feature type="strand" evidence="5">
    <location>
        <begin position="215"/>
        <end position="221"/>
    </location>
</feature>
<feature type="turn" evidence="5">
    <location>
        <begin position="222"/>
        <end position="225"/>
    </location>
</feature>
<feature type="strand" evidence="5">
    <location>
        <begin position="226"/>
        <end position="231"/>
    </location>
</feature>
<feature type="turn" evidence="5">
    <location>
        <begin position="239"/>
        <end position="241"/>
    </location>
</feature>
<feature type="strand" evidence="5">
    <location>
        <begin position="242"/>
        <end position="244"/>
    </location>
</feature>
<feature type="strand" evidence="5">
    <location>
        <begin position="247"/>
        <end position="254"/>
    </location>
</feature>
<feature type="strand" evidence="5">
    <location>
        <begin position="256"/>
        <end position="259"/>
    </location>
</feature>
<feature type="strand" evidence="5">
    <location>
        <begin position="261"/>
        <end position="263"/>
    </location>
</feature>
<feature type="strand" evidence="5">
    <location>
        <begin position="266"/>
        <end position="269"/>
    </location>
</feature>
<feature type="strand" evidence="5">
    <location>
        <begin position="274"/>
        <end position="280"/>
    </location>
</feature>
<feature type="strand" evidence="5">
    <location>
        <begin position="283"/>
        <end position="292"/>
    </location>
</feature>
<feature type="strand" evidence="5">
    <location>
        <begin position="295"/>
        <end position="300"/>
    </location>
</feature>
<feature type="strand" evidence="5">
    <location>
        <begin position="312"/>
        <end position="318"/>
    </location>
</feature>
<feature type="helix" evidence="5">
    <location>
        <begin position="320"/>
        <end position="322"/>
    </location>
</feature>
<feature type="strand" evidence="5">
    <location>
        <begin position="323"/>
        <end position="326"/>
    </location>
</feature>
<accession>O34968</accession>
<accession>O30567</accession>
<accession>Q799E9</accession>
<reference key="1">
    <citation type="journal article" date="1996" name="Microbiology">
        <title>The 52 degrees-55 degrees segment of the Bacillus subtilis chromosome: a region devoted to purine uptake and metabolism, and containing the genes cotA, gabP and guaA and the pur gene cluster within a 34960 bp nucleotide sequence.</title>
        <authorList>
            <person name="Borriss R."/>
            <person name="Porwollik S."/>
            <person name="Schroeter R."/>
        </authorList>
    </citation>
    <scope>NUCLEOTIDE SEQUENCE [GENOMIC DNA]</scope>
    <source>
        <strain>168</strain>
    </source>
</reference>
<reference key="2">
    <citation type="journal article" date="1998" name="Mol. Microbiol.">
        <title>PcrA is an essential DNA helicase of Bacillus subtilis fulfilling functions both in repair and rolling-circle replication.</title>
        <authorList>
            <person name="Petit M.-A."/>
            <person name="Dervyn E."/>
            <person name="Rose M."/>
            <person name="Entian K.-D."/>
            <person name="McGovern S."/>
            <person name="Ehrlich S.D."/>
            <person name="Bruand C."/>
        </authorList>
    </citation>
    <scope>NUCLEOTIDE SEQUENCE [GENOMIC DNA]</scope>
    <source>
        <strain>168</strain>
    </source>
</reference>
<reference key="3">
    <citation type="journal article" date="1997" name="Nature">
        <title>The complete genome sequence of the Gram-positive bacterium Bacillus subtilis.</title>
        <authorList>
            <person name="Kunst F."/>
            <person name="Ogasawara N."/>
            <person name="Moszer I."/>
            <person name="Albertini A.M."/>
            <person name="Alloni G."/>
            <person name="Azevedo V."/>
            <person name="Bertero M.G."/>
            <person name="Bessieres P."/>
            <person name="Bolotin A."/>
            <person name="Borchert S."/>
            <person name="Borriss R."/>
            <person name="Boursier L."/>
            <person name="Brans A."/>
            <person name="Braun M."/>
            <person name="Brignell S.C."/>
            <person name="Bron S."/>
            <person name="Brouillet S."/>
            <person name="Bruschi C.V."/>
            <person name="Caldwell B."/>
            <person name="Capuano V."/>
            <person name="Carter N.M."/>
            <person name="Choi S.-K."/>
            <person name="Codani J.-J."/>
            <person name="Connerton I.F."/>
            <person name="Cummings N.J."/>
            <person name="Daniel R.A."/>
            <person name="Denizot F."/>
            <person name="Devine K.M."/>
            <person name="Duesterhoeft A."/>
            <person name="Ehrlich S.D."/>
            <person name="Emmerson P.T."/>
            <person name="Entian K.-D."/>
            <person name="Errington J."/>
            <person name="Fabret C."/>
            <person name="Ferrari E."/>
            <person name="Foulger D."/>
            <person name="Fritz C."/>
            <person name="Fujita M."/>
            <person name="Fujita Y."/>
            <person name="Fuma S."/>
            <person name="Galizzi A."/>
            <person name="Galleron N."/>
            <person name="Ghim S.-Y."/>
            <person name="Glaser P."/>
            <person name="Goffeau A."/>
            <person name="Golightly E.J."/>
            <person name="Grandi G."/>
            <person name="Guiseppi G."/>
            <person name="Guy B.J."/>
            <person name="Haga K."/>
            <person name="Haiech J."/>
            <person name="Harwood C.R."/>
            <person name="Henaut A."/>
            <person name="Hilbert H."/>
            <person name="Holsappel S."/>
            <person name="Hosono S."/>
            <person name="Hullo M.-F."/>
            <person name="Itaya M."/>
            <person name="Jones L.-M."/>
            <person name="Joris B."/>
            <person name="Karamata D."/>
            <person name="Kasahara Y."/>
            <person name="Klaerr-Blanchard M."/>
            <person name="Klein C."/>
            <person name="Kobayashi Y."/>
            <person name="Koetter P."/>
            <person name="Koningstein G."/>
            <person name="Krogh S."/>
            <person name="Kumano M."/>
            <person name="Kurita K."/>
            <person name="Lapidus A."/>
            <person name="Lardinois S."/>
            <person name="Lauber J."/>
            <person name="Lazarevic V."/>
            <person name="Lee S.-M."/>
            <person name="Levine A."/>
            <person name="Liu H."/>
            <person name="Masuda S."/>
            <person name="Mauel C."/>
            <person name="Medigue C."/>
            <person name="Medina N."/>
            <person name="Mellado R.P."/>
            <person name="Mizuno M."/>
            <person name="Moestl D."/>
            <person name="Nakai S."/>
            <person name="Noback M."/>
            <person name="Noone D."/>
            <person name="O'Reilly M."/>
            <person name="Ogawa K."/>
            <person name="Ogiwara A."/>
            <person name="Oudega B."/>
            <person name="Park S.-H."/>
            <person name="Parro V."/>
            <person name="Pohl T.M."/>
            <person name="Portetelle D."/>
            <person name="Porwollik S."/>
            <person name="Prescott A.M."/>
            <person name="Presecan E."/>
            <person name="Pujic P."/>
            <person name="Purnelle B."/>
            <person name="Rapoport G."/>
            <person name="Rey M."/>
            <person name="Reynolds S."/>
            <person name="Rieger M."/>
            <person name="Rivolta C."/>
            <person name="Rocha E."/>
            <person name="Roche B."/>
            <person name="Rose M."/>
            <person name="Sadaie Y."/>
            <person name="Sato T."/>
            <person name="Scanlan E."/>
            <person name="Schleich S."/>
            <person name="Schroeter R."/>
            <person name="Scoffone F."/>
            <person name="Sekiguchi J."/>
            <person name="Sekowska A."/>
            <person name="Seror S.J."/>
            <person name="Serror P."/>
            <person name="Shin B.-S."/>
            <person name="Soldo B."/>
            <person name="Sorokin A."/>
            <person name="Tacconi E."/>
            <person name="Takagi T."/>
            <person name="Takahashi H."/>
            <person name="Takemaru K."/>
            <person name="Takeuchi M."/>
            <person name="Tamakoshi A."/>
            <person name="Tanaka T."/>
            <person name="Terpstra P."/>
            <person name="Tognoni A."/>
            <person name="Tosato V."/>
            <person name="Uchiyama S."/>
            <person name="Vandenbol M."/>
            <person name="Vannier F."/>
            <person name="Vassarotti A."/>
            <person name="Viari A."/>
            <person name="Wambutt R."/>
            <person name="Wedler E."/>
            <person name="Wedler H."/>
            <person name="Weitzenegger T."/>
            <person name="Winters P."/>
            <person name="Wipat A."/>
            <person name="Yamamoto H."/>
            <person name="Yamane K."/>
            <person name="Yasumoto K."/>
            <person name="Yata K."/>
            <person name="Yoshida K."/>
            <person name="Yoshikawa H.-F."/>
            <person name="Zumstein E."/>
            <person name="Yoshikawa H."/>
            <person name="Danchin A."/>
        </authorList>
    </citation>
    <scope>NUCLEOTIDE SEQUENCE [LARGE SCALE GENOMIC DNA]</scope>
    <source>
        <strain>168</strain>
    </source>
</reference>
<reference key="4">
    <citation type="journal article" date="2002" name="Mol. Genet. Genomics">
        <title>The beta-propeller protein YxaL increases the processivity of the PcrA helicase.</title>
        <authorList>
            <person name="Noirot-Gros M.-F."/>
            <person name="Soultanas P."/>
            <person name="Wigley D.B."/>
            <person name="Ehrlich S.D."/>
            <person name="Noirot P."/>
            <person name="Petit M.-A."/>
        </authorList>
    </citation>
    <scope>INTERACTION WITH PCRA</scope>
    <scope>DISRUPTION PHENOTYPE</scope>
</reference>
<reference key="5">
    <citation type="journal article" date="2007" name="Mol. Cell. Proteomics">
        <title>The serine/threonine/tyrosine phosphoproteome of the model bacterium Bacillus subtilis.</title>
        <authorList>
            <person name="Macek B."/>
            <person name="Mijakovic I."/>
            <person name="Olsen J.V."/>
            <person name="Gnad F."/>
            <person name="Kumar C."/>
            <person name="Jensen P.R."/>
            <person name="Mann M."/>
        </authorList>
    </citation>
    <scope>PHOSPHORYLATION [LARGE SCALE ANALYSIS] AT THR-97 AND SER-103</scope>
    <scope>IDENTIFICATION BY MASS SPECTROMETRY</scope>
    <source>
        <strain>168</strain>
    </source>
</reference>
<reference key="6">
    <citation type="submission" date="2007-05" db="PDB data bank">
        <title>Crystal structure of yerB protein from Bacillus subtilis.</title>
        <authorList>
            <consortium name="Northeast structural genomics consortium (NESG)"/>
        </authorList>
    </citation>
    <scope>X-RAY CRYSTALLOGRAPHY (2.1 ANGSTROMS) OF 21-331</scope>
</reference>
<organism>
    <name type="scientific">Bacillus subtilis (strain 168)</name>
    <dbReference type="NCBI Taxonomy" id="224308"/>
    <lineage>
        <taxon>Bacteria</taxon>
        <taxon>Bacillati</taxon>
        <taxon>Bacillota</taxon>
        <taxon>Bacilli</taxon>
        <taxon>Bacillales</taxon>
        <taxon>Bacillaceae</taxon>
        <taxon>Bacillus</taxon>
    </lineage>
</organism>
<keyword id="KW-0002">3D-structure</keyword>
<keyword id="KW-1003">Cell membrane</keyword>
<keyword id="KW-0449">Lipoprotein</keyword>
<keyword id="KW-0472">Membrane</keyword>
<keyword id="KW-0564">Palmitate</keyword>
<keyword id="KW-0597">Phosphoprotein</keyword>
<keyword id="KW-1185">Reference proteome</keyword>
<keyword id="KW-0732">Signal</keyword>
<comment type="subunit">
    <text evidence="2">Interacts with PcrA. The interaction is not essential for cell viability or repair of UV-induced lesions.</text>
</comment>
<comment type="subcellular location">
    <subcellularLocation>
        <location evidence="1">Cell membrane</location>
        <topology evidence="1">Lipid-anchor</topology>
    </subcellularLocation>
</comment>
<comment type="disruption phenotype">
    <text evidence="2">No PcrA-related phenotype.</text>
</comment>
<gene>
    <name type="primary">yerB</name>
    <name type="synonym">yecC</name>
    <name type="ordered locus">BSU06570</name>
</gene>
<name>YERB_BACSU</name>
<proteinExistence type="evidence at protein level"/>
<dbReference type="EMBL" id="AF011544">
    <property type="protein sequence ID" value="AAB72189.1"/>
    <property type="molecule type" value="Genomic_DNA"/>
</dbReference>
<dbReference type="EMBL" id="Y15254">
    <property type="protein sequence ID" value="CAA75548.1"/>
    <property type="molecule type" value="Genomic_DNA"/>
</dbReference>
<dbReference type="EMBL" id="AL009126">
    <property type="protein sequence ID" value="CAB12477.1"/>
    <property type="molecule type" value="Genomic_DNA"/>
</dbReference>
<dbReference type="PIR" id="A69794">
    <property type="entry name" value="A69794"/>
</dbReference>
<dbReference type="RefSeq" id="NP_388539.1">
    <property type="nucleotide sequence ID" value="NC_000964.3"/>
</dbReference>
<dbReference type="RefSeq" id="WP_003233927.1">
    <property type="nucleotide sequence ID" value="NZ_OZ025638.1"/>
</dbReference>
<dbReference type="PDB" id="2PSB">
    <property type="method" value="X-ray"/>
    <property type="resolution" value="2.10 A"/>
    <property type="chains" value="A=21-331"/>
</dbReference>
<dbReference type="PDBsum" id="2PSB"/>
<dbReference type="SMR" id="O34968"/>
<dbReference type="FunCoup" id="O34968">
    <property type="interactions" value="6"/>
</dbReference>
<dbReference type="IntAct" id="O34968">
    <property type="interactions" value="1"/>
</dbReference>
<dbReference type="STRING" id="224308.BSU06570"/>
<dbReference type="iPTMnet" id="O34968"/>
<dbReference type="PaxDb" id="224308-BSU06570"/>
<dbReference type="DNASU" id="936050"/>
<dbReference type="EnsemblBacteria" id="CAB12477">
    <property type="protein sequence ID" value="CAB12477"/>
    <property type="gene ID" value="BSU_06570"/>
</dbReference>
<dbReference type="GeneID" id="936050"/>
<dbReference type="KEGG" id="bsu:BSU06570"/>
<dbReference type="PATRIC" id="fig|224308.179.peg.714"/>
<dbReference type="eggNOG" id="COG1470">
    <property type="taxonomic scope" value="Bacteria"/>
</dbReference>
<dbReference type="InParanoid" id="O34968"/>
<dbReference type="OrthoDB" id="9779102at2"/>
<dbReference type="PhylomeDB" id="O34968"/>
<dbReference type="BioCyc" id="BSUB:BSU06570-MONOMER"/>
<dbReference type="EvolutionaryTrace" id="O34968"/>
<dbReference type="Proteomes" id="UP000001570">
    <property type="component" value="Chromosome"/>
</dbReference>
<dbReference type="GO" id="GO:0005886">
    <property type="term" value="C:plasma membrane"/>
    <property type="evidence" value="ECO:0007669"/>
    <property type="project" value="UniProtKB-SubCell"/>
</dbReference>
<dbReference type="Gene3D" id="3.50.90.10">
    <property type="entry name" value="YerB-like"/>
    <property type="match status" value="1"/>
</dbReference>
<dbReference type="InterPro" id="IPR035328">
    <property type="entry name" value="DUF3048_C"/>
</dbReference>
<dbReference type="InterPro" id="IPR021416">
    <property type="entry name" value="DUF3048_N"/>
</dbReference>
<dbReference type="InterPro" id="IPR023158">
    <property type="entry name" value="YerB-like_sf"/>
</dbReference>
<dbReference type="Pfam" id="PF11258">
    <property type="entry name" value="DUF3048"/>
    <property type="match status" value="1"/>
</dbReference>
<dbReference type="Pfam" id="PF17479">
    <property type="entry name" value="DUF3048_C"/>
    <property type="match status" value="1"/>
</dbReference>
<dbReference type="SUPFAM" id="SSF159774">
    <property type="entry name" value="YerB-like"/>
    <property type="match status" value="1"/>
</dbReference>
<dbReference type="PROSITE" id="PS51257">
    <property type="entry name" value="PROKAR_LIPOPROTEIN"/>
    <property type="match status" value="1"/>
</dbReference>
<protein>
    <recommendedName>
        <fullName>Putative lipoprotein YerB</fullName>
    </recommendedName>
</protein>